<gene>
    <name evidence="1" type="primary">ubiA</name>
    <name type="ordered locus">Shew185_3891</name>
</gene>
<name>UBIA_SHEB8</name>
<keyword id="KW-0997">Cell inner membrane</keyword>
<keyword id="KW-1003">Cell membrane</keyword>
<keyword id="KW-0460">Magnesium</keyword>
<keyword id="KW-0472">Membrane</keyword>
<keyword id="KW-0808">Transferase</keyword>
<keyword id="KW-0812">Transmembrane</keyword>
<keyword id="KW-1133">Transmembrane helix</keyword>
<keyword id="KW-0831">Ubiquinone biosynthesis</keyword>
<evidence type="ECO:0000255" key="1">
    <source>
        <dbReference type="HAMAP-Rule" id="MF_01635"/>
    </source>
</evidence>
<comment type="function">
    <text evidence="1">Catalyzes the prenylation of para-hydroxybenzoate (PHB) with an all-trans polyprenyl group. Mediates the second step in the final reaction sequence of ubiquinone-8 (UQ-8) biosynthesis, which is the condensation of the polyisoprenoid side chain with PHB, generating the first membrane-bound Q intermediate 3-octaprenyl-4-hydroxybenzoate.</text>
</comment>
<comment type="catalytic activity">
    <reaction evidence="1">
        <text>all-trans-octaprenyl diphosphate + 4-hydroxybenzoate = 4-hydroxy-3-(all-trans-octaprenyl)benzoate + diphosphate</text>
        <dbReference type="Rhea" id="RHEA:27782"/>
        <dbReference type="ChEBI" id="CHEBI:1617"/>
        <dbReference type="ChEBI" id="CHEBI:17879"/>
        <dbReference type="ChEBI" id="CHEBI:33019"/>
        <dbReference type="ChEBI" id="CHEBI:57711"/>
        <dbReference type="EC" id="2.5.1.39"/>
    </reaction>
</comment>
<comment type="cofactor">
    <cofactor evidence="1">
        <name>Mg(2+)</name>
        <dbReference type="ChEBI" id="CHEBI:18420"/>
    </cofactor>
</comment>
<comment type="pathway">
    <text evidence="1">Cofactor biosynthesis; ubiquinone biosynthesis.</text>
</comment>
<comment type="subcellular location">
    <subcellularLocation>
        <location evidence="1">Cell inner membrane</location>
        <topology evidence="1">Multi-pass membrane protein</topology>
    </subcellularLocation>
</comment>
<comment type="similarity">
    <text evidence="1">Belongs to the UbiA prenyltransferase family.</text>
</comment>
<sequence>MTLKQKWDVYSRLTRIDRPIGTLLLLWPCLMALMLAAGGMPDLKVLVIFIIGVVIMRACGCIINDYADRDLDSFVERTRSRPLASGEISTKEALILFVILGLSAFGLVLLLNGLVVKLSVVGIILTIIYPFTKRITNMPQMFLGIVWSWSIPMAYAAQTGEVPMEAWWLFAANWCWTVAYDTMYAMVDRDDDLKVGIKSTAILFGKYDRQIIGLFQLAALACFIAAGWSADRGLLYGLGILTFVGFSTYQQMLIFDRERAPCFKAFLNNNWAGLALFVGLGADYLI</sequence>
<reference key="1">
    <citation type="submission" date="2007-07" db="EMBL/GenBank/DDBJ databases">
        <title>Complete sequence of chromosome of Shewanella baltica OS185.</title>
        <authorList>
            <consortium name="US DOE Joint Genome Institute"/>
            <person name="Copeland A."/>
            <person name="Lucas S."/>
            <person name="Lapidus A."/>
            <person name="Barry K."/>
            <person name="Glavina del Rio T."/>
            <person name="Dalin E."/>
            <person name="Tice H."/>
            <person name="Pitluck S."/>
            <person name="Sims D."/>
            <person name="Brettin T."/>
            <person name="Bruce D."/>
            <person name="Detter J.C."/>
            <person name="Han C."/>
            <person name="Schmutz J."/>
            <person name="Larimer F."/>
            <person name="Land M."/>
            <person name="Hauser L."/>
            <person name="Kyrpides N."/>
            <person name="Mikhailova N."/>
            <person name="Brettar I."/>
            <person name="Rodrigues J."/>
            <person name="Konstantinidis K."/>
            <person name="Tiedje J."/>
            <person name="Richardson P."/>
        </authorList>
    </citation>
    <scope>NUCLEOTIDE SEQUENCE [LARGE SCALE GENOMIC DNA]</scope>
    <source>
        <strain>OS185</strain>
    </source>
</reference>
<organism>
    <name type="scientific">Shewanella baltica (strain OS185)</name>
    <dbReference type="NCBI Taxonomy" id="402882"/>
    <lineage>
        <taxon>Bacteria</taxon>
        <taxon>Pseudomonadati</taxon>
        <taxon>Pseudomonadota</taxon>
        <taxon>Gammaproteobacteria</taxon>
        <taxon>Alteromonadales</taxon>
        <taxon>Shewanellaceae</taxon>
        <taxon>Shewanella</taxon>
    </lineage>
</organism>
<accession>A6WT76</accession>
<feature type="chain" id="PRO_1000088181" description="4-hydroxybenzoate octaprenyltransferase">
    <location>
        <begin position="1"/>
        <end position="286"/>
    </location>
</feature>
<feature type="transmembrane region" description="Helical" evidence="1">
    <location>
        <begin position="21"/>
        <end position="40"/>
    </location>
</feature>
<feature type="transmembrane region" description="Helical" evidence="1">
    <location>
        <begin position="95"/>
        <end position="115"/>
    </location>
</feature>
<feature type="transmembrane region" description="Helical" evidence="1">
    <location>
        <begin position="142"/>
        <end position="162"/>
    </location>
</feature>
<feature type="transmembrane region" description="Helical" evidence="1">
    <location>
        <begin position="167"/>
        <end position="187"/>
    </location>
</feature>
<feature type="transmembrane region" description="Helical" evidence="1">
    <location>
        <begin position="210"/>
        <end position="230"/>
    </location>
</feature>
<feature type="transmembrane region" description="Helical" evidence="1">
    <location>
        <begin position="235"/>
        <end position="255"/>
    </location>
</feature>
<feature type="transmembrane region" description="Helical" evidence="1">
    <location>
        <begin position="266"/>
        <end position="286"/>
    </location>
</feature>
<proteinExistence type="inferred from homology"/>
<dbReference type="EC" id="2.5.1.39" evidence="1"/>
<dbReference type="EMBL" id="CP000753">
    <property type="protein sequence ID" value="ABS10015.1"/>
    <property type="molecule type" value="Genomic_DNA"/>
</dbReference>
<dbReference type="RefSeq" id="WP_012090345.1">
    <property type="nucleotide sequence ID" value="NC_009665.1"/>
</dbReference>
<dbReference type="SMR" id="A6WT76"/>
<dbReference type="KEGG" id="sbm:Shew185_3891"/>
<dbReference type="HOGENOM" id="CLU_034879_1_0_6"/>
<dbReference type="UniPathway" id="UPA00232"/>
<dbReference type="GO" id="GO:0005886">
    <property type="term" value="C:plasma membrane"/>
    <property type="evidence" value="ECO:0007669"/>
    <property type="project" value="UniProtKB-SubCell"/>
</dbReference>
<dbReference type="GO" id="GO:0008412">
    <property type="term" value="F:4-hydroxybenzoate polyprenyltransferase activity"/>
    <property type="evidence" value="ECO:0007669"/>
    <property type="project" value="UniProtKB-UniRule"/>
</dbReference>
<dbReference type="GO" id="GO:0006744">
    <property type="term" value="P:ubiquinone biosynthetic process"/>
    <property type="evidence" value="ECO:0007669"/>
    <property type="project" value="UniProtKB-UniRule"/>
</dbReference>
<dbReference type="CDD" id="cd13959">
    <property type="entry name" value="PT_UbiA_COQ2"/>
    <property type="match status" value="1"/>
</dbReference>
<dbReference type="FunFam" id="1.10.357.140:FF:000002">
    <property type="entry name" value="4-hydroxybenzoate octaprenyltransferase"/>
    <property type="match status" value="1"/>
</dbReference>
<dbReference type="FunFam" id="1.20.120.1780:FF:000001">
    <property type="entry name" value="4-hydroxybenzoate octaprenyltransferase"/>
    <property type="match status" value="1"/>
</dbReference>
<dbReference type="Gene3D" id="1.10.357.140">
    <property type="entry name" value="UbiA prenyltransferase"/>
    <property type="match status" value="1"/>
</dbReference>
<dbReference type="Gene3D" id="1.20.120.1780">
    <property type="entry name" value="UbiA prenyltransferase"/>
    <property type="match status" value="1"/>
</dbReference>
<dbReference type="HAMAP" id="MF_01635">
    <property type="entry name" value="UbiA"/>
    <property type="match status" value="1"/>
</dbReference>
<dbReference type="InterPro" id="IPR006370">
    <property type="entry name" value="HB_polyprenyltransferase-like"/>
</dbReference>
<dbReference type="InterPro" id="IPR039653">
    <property type="entry name" value="Prenyltransferase"/>
</dbReference>
<dbReference type="InterPro" id="IPR000537">
    <property type="entry name" value="UbiA_prenyltransferase"/>
</dbReference>
<dbReference type="InterPro" id="IPR030470">
    <property type="entry name" value="UbiA_prenylTrfase_CS"/>
</dbReference>
<dbReference type="InterPro" id="IPR044878">
    <property type="entry name" value="UbiA_sf"/>
</dbReference>
<dbReference type="NCBIfam" id="TIGR01474">
    <property type="entry name" value="ubiA_proteo"/>
    <property type="match status" value="1"/>
</dbReference>
<dbReference type="PANTHER" id="PTHR11048:SF28">
    <property type="entry name" value="4-HYDROXYBENZOATE POLYPRENYLTRANSFERASE, MITOCHONDRIAL"/>
    <property type="match status" value="1"/>
</dbReference>
<dbReference type="PANTHER" id="PTHR11048">
    <property type="entry name" value="PRENYLTRANSFERASES"/>
    <property type="match status" value="1"/>
</dbReference>
<dbReference type="Pfam" id="PF01040">
    <property type="entry name" value="UbiA"/>
    <property type="match status" value="1"/>
</dbReference>
<dbReference type="PROSITE" id="PS00943">
    <property type="entry name" value="UBIA"/>
    <property type="match status" value="1"/>
</dbReference>
<protein>
    <recommendedName>
        <fullName evidence="1">4-hydroxybenzoate octaprenyltransferase</fullName>
        <ecNumber evidence="1">2.5.1.39</ecNumber>
    </recommendedName>
    <alternativeName>
        <fullName evidence="1">4-HB polyprenyltransferase</fullName>
    </alternativeName>
</protein>